<sequence>EQFDDYGHMRF</sequence>
<accession>P85856</accession>
<protein>
    <recommendedName>
        <fullName evidence="4">Sulfakinin-1</fullName>
        <shortName evidence="4">SheLa-SK-1</shortName>
    </recommendedName>
</protein>
<name>SK1_SHELA</name>
<reference evidence="5" key="1">
    <citation type="journal article" date="2009" name="BMC Evol. Biol.">
        <title>A proteomic approach for studying insect phylogeny: CAPA peptides of ancient insect taxa (Dictyoptera, Blattoptera) as a test case.</title>
        <authorList>
            <person name="Roth S."/>
            <person name="Fromm B."/>
            <person name="Gaede G."/>
            <person name="Predel R."/>
        </authorList>
    </citation>
    <scope>PROTEIN SEQUENCE</scope>
    <scope>AMIDATION AT PHE-11</scope>
    <source>
        <tissue evidence="3">Corpora cardiaca</tissue>
    </source>
</reference>
<proteinExistence type="evidence at protein level"/>
<feature type="peptide" id="PRO_0000378900" description="Sulfakinin-1" evidence="3">
    <location>
        <begin position="1"/>
        <end position="11"/>
    </location>
</feature>
<feature type="modified residue" description="Sulfotyrosine" evidence="1">
    <location>
        <position position="6"/>
    </location>
</feature>
<feature type="modified residue" description="Phenylalanine amide" evidence="3">
    <location>
        <position position="11"/>
    </location>
</feature>
<keyword id="KW-0027">Amidation</keyword>
<keyword id="KW-0903">Direct protein sequencing</keyword>
<keyword id="KW-0372">Hormone</keyword>
<keyword id="KW-0527">Neuropeptide</keyword>
<keyword id="KW-0964">Secreted</keyword>
<keyword id="KW-0765">Sulfation</keyword>
<dbReference type="GO" id="GO:0005576">
    <property type="term" value="C:extracellular region"/>
    <property type="evidence" value="ECO:0007669"/>
    <property type="project" value="UniProtKB-SubCell"/>
</dbReference>
<dbReference type="GO" id="GO:0005179">
    <property type="term" value="F:hormone activity"/>
    <property type="evidence" value="ECO:0007669"/>
    <property type="project" value="UniProtKB-KW"/>
</dbReference>
<dbReference type="GO" id="GO:0007218">
    <property type="term" value="P:neuropeptide signaling pathway"/>
    <property type="evidence" value="ECO:0007669"/>
    <property type="project" value="UniProtKB-KW"/>
</dbReference>
<dbReference type="InterPro" id="IPR013152">
    <property type="entry name" value="Gastrin/cholecystokinin_CS"/>
</dbReference>
<dbReference type="InterPro" id="IPR013259">
    <property type="entry name" value="Sulfakinin"/>
</dbReference>
<dbReference type="Pfam" id="PF08257">
    <property type="entry name" value="Sulfakinin"/>
    <property type="match status" value="1"/>
</dbReference>
<dbReference type="PROSITE" id="PS00259">
    <property type="entry name" value="GASTRIN"/>
    <property type="match status" value="1"/>
</dbReference>
<evidence type="ECO:0000250" key="1">
    <source>
        <dbReference type="UniProtKB" id="P41493"/>
    </source>
</evidence>
<evidence type="ECO:0000255" key="2"/>
<evidence type="ECO:0000269" key="3">
    <source>
    </source>
</evidence>
<evidence type="ECO:0000303" key="4">
    <source>
    </source>
</evidence>
<evidence type="ECO:0000305" key="5"/>
<comment type="function">
    <text evidence="1">Myotropic peptide.</text>
</comment>
<comment type="subcellular location">
    <subcellularLocation>
        <location evidence="5">Secreted</location>
    </subcellularLocation>
</comment>
<comment type="similarity">
    <text evidence="2">Belongs to the gastrin/cholecystokinin family.</text>
</comment>
<organism>
    <name type="scientific">Shelfordella lateralis</name>
    <name type="common">Turkestan cockroach</name>
    <name type="synonym">Periplaneta lateralis</name>
    <dbReference type="NCBI Taxonomy" id="36981"/>
    <lineage>
        <taxon>Eukaryota</taxon>
        <taxon>Metazoa</taxon>
        <taxon>Ecdysozoa</taxon>
        <taxon>Arthropoda</taxon>
        <taxon>Hexapoda</taxon>
        <taxon>Insecta</taxon>
        <taxon>Pterygota</taxon>
        <taxon>Neoptera</taxon>
        <taxon>Polyneoptera</taxon>
        <taxon>Dictyoptera</taxon>
        <taxon>Blattodea</taxon>
        <taxon>Blattoidea</taxon>
        <taxon>Blattidae</taxon>
        <taxon>Blattinae</taxon>
        <taxon>Periplaneta</taxon>
    </lineage>
</organism>